<dbReference type="EMBL" id="CP000888">
    <property type="protein sequence ID" value="ACD74082.1"/>
    <property type="molecule type" value="Genomic_DNA"/>
</dbReference>
<dbReference type="RefSeq" id="WP_002966022.1">
    <property type="nucleotide sequence ID" value="NC_010740.1"/>
</dbReference>
<dbReference type="SMR" id="B2SB45"/>
<dbReference type="KEGG" id="bmc:BAbS19_II05870"/>
<dbReference type="HOGENOM" id="CLU_000445_69_17_5"/>
<dbReference type="Proteomes" id="UP000002565">
    <property type="component" value="Chromosome 2"/>
</dbReference>
<dbReference type="GO" id="GO:0005737">
    <property type="term" value="C:cytoplasm"/>
    <property type="evidence" value="ECO:0007669"/>
    <property type="project" value="UniProtKB-SubCell"/>
</dbReference>
<dbReference type="GO" id="GO:0003677">
    <property type="term" value="F:DNA binding"/>
    <property type="evidence" value="ECO:0007669"/>
    <property type="project" value="UniProtKB-KW"/>
</dbReference>
<dbReference type="GO" id="GO:0000160">
    <property type="term" value="P:phosphorelay signal transduction system"/>
    <property type="evidence" value="ECO:0007669"/>
    <property type="project" value="UniProtKB-KW"/>
</dbReference>
<dbReference type="CDD" id="cd17548">
    <property type="entry name" value="REC_DivK-like"/>
    <property type="match status" value="1"/>
</dbReference>
<dbReference type="Gene3D" id="3.40.50.2300">
    <property type="match status" value="1"/>
</dbReference>
<dbReference type="InterPro" id="IPR050595">
    <property type="entry name" value="Bact_response_regulator"/>
</dbReference>
<dbReference type="InterPro" id="IPR011006">
    <property type="entry name" value="CheY-like_superfamily"/>
</dbReference>
<dbReference type="InterPro" id="IPR001789">
    <property type="entry name" value="Sig_transdc_resp-reg_receiver"/>
</dbReference>
<dbReference type="PANTHER" id="PTHR44591:SF3">
    <property type="entry name" value="RESPONSE REGULATORY DOMAIN-CONTAINING PROTEIN"/>
    <property type="match status" value="1"/>
</dbReference>
<dbReference type="PANTHER" id="PTHR44591">
    <property type="entry name" value="STRESS RESPONSE REGULATOR PROTEIN 1"/>
    <property type="match status" value="1"/>
</dbReference>
<dbReference type="Pfam" id="PF00072">
    <property type="entry name" value="Response_reg"/>
    <property type="match status" value="1"/>
</dbReference>
<dbReference type="SMART" id="SM00448">
    <property type="entry name" value="REC"/>
    <property type="match status" value="1"/>
</dbReference>
<dbReference type="SUPFAM" id="SSF52172">
    <property type="entry name" value="CheY-like"/>
    <property type="match status" value="1"/>
</dbReference>
<dbReference type="PROSITE" id="PS50110">
    <property type="entry name" value="RESPONSE_REGULATORY"/>
    <property type="match status" value="1"/>
</dbReference>
<organism>
    <name type="scientific">Brucella abortus (strain S19)</name>
    <dbReference type="NCBI Taxonomy" id="430066"/>
    <lineage>
        <taxon>Bacteria</taxon>
        <taxon>Pseudomonadati</taxon>
        <taxon>Pseudomonadota</taxon>
        <taxon>Alphaproteobacteria</taxon>
        <taxon>Hyphomicrobiales</taxon>
        <taxon>Brucellaceae</taxon>
        <taxon>Brucella/Ochrobactrum group</taxon>
        <taxon>Brucella</taxon>
    </lineage>
</organism>
<reference key="1">
    <citation type="journal article" date="2008" name="PLoS ONE">
        <title>Genome sequence of Brucella abortus vaccine strain S19 compared to virulent strains yields candidate virulence genes.</title>
        <authorList>
            <person name="Crasta O.R."/>
            <person name="Folkerts O."/>
            <person name="Fei Z."/>
            <person name="Mane S.P."/>
            <person name="Evans C."/>
            <person name="Martino-Catt S."/>
            <person name="Bricker B."/>
            <person name="Yu G."/>
            <person name="Du L."/>
            <person name="Sobral B.W."/>
        </authorList>
    </citation>
    <scope>NUCLEOTIDE SEQUENCE [LARGE SCALE GENOMIC DNA]</scope>
    <source>
        <strain>S19</strain>
    </source>
</reference>
<protein>
    <recommendedName>
        <fullName>Polar-differentiation response regulator DivK</fullName>
    </recommendedName>
</protein>
<evidence type="ECO:0000250" key="1"/>
<evidence type="ECO:0000255" key="2">
    <source>
        <dbReference type="PROSITE-ProRule" id="PRU00169"/>
    </source>
</evidence>
<comment type="function">
    <text evidence="1">Essential protein that is involved in the control of cell division, probably through the regulation of ctrA. Its phosphorylation status is regulated by PdhS (By similarity).</text>
</comment>
<comment type="subunit">
    <text evidence="1">Interacts with DivL, PleC, DivJ and PdhS.</text>
</comment>
<comment type="subcellular location">
    <subcellularLocation>
        <location evidence="1">Cytoplasm</location>
    </subcellularLocation>
    <text evidence="1">Localized at one pole of the cell. Colocalizes with PdhS (By similarity).</text>
</comment>
<feature type="chain" id="PRO_0000363204" description="Polar-differentiation response regulator DivK">
    <location>
        <begin position="1"/>
        <end position="123"/>
    </location>
</feature>
<feature type="domain" description="Response regulatory" evidence="2">
    <location>
        <begin position="4"/>
        <end position="120"/>
    </location>
</feature>
<feature type="modified residue" description="4-aspartylphosphate" evidence="2">
    <location>
        <position position="53"/>
    </location>
</feature>
<keyword id="KW-0963">Cytoplasm</keyword>
<keyword id="KW-0238">DNA-binding</keyword>
<keyword id="KW-0597">Phosphoprotein</keyword>
<keyword id="KW-0804">Transcription</keyword>
<keyword id="KW-0805">Transcription regulation</keyword>
<keyword id="KW-0902">Two-component regulatory system</keyword>
<proteinExistence type="inferred from homology"/>
<gene>
    <name type="primary">divK</name>
    <name type="ordered locus">BAbS19_II05870</name>
</gene>
<accession>B2SB45</accession>
<name>DIVK_BRUA1</name>
<sequence length="123" mass="13973">MTKSVMIVEDNELNMKLFRDLIEASGYETIRTRSGLEALDLAREHHPDLILMDIQLPEVSGLEVTKWLKDDEELRHIPVIAVTAFAMKGDEERIRQGGCEAYISKPISVPRFIETIKSYLGDA</sequence>